<name>MAO1_SALDC</name>
<dbReference type="EC" id="1.1.1.38" evidence="1"/>
<dbReference type="EMBL" id="CP001144">
    <property type="protein sequence ID" value="ACH76192.1"/>
    <property type="molecule type" value="Genomic_DNA"/>
</dbReference>
<dbReference type="RefSeq" id="WP_000447951.1">
    <property type="nucleotide sequence ID" value="NC_011205.1"/>
</dbReference>
<dbReference type="SMR" id="B5FHJ6"/>
<dbReference type="KEGG" id="sed:SeD_A1777"/>
<dbReference type="HOGENOM" id="CLU_011405_5_2_6"/>
<dbReference type="Proteomes" id="UP000008322">
    <property type="component" value="Chromosome"/>
</dbReference>
<dbReference type="GO" id="GO:0005829">
    <property type="term" value="C:cytosol"/>
    <property type="evidence" value="ECO:0007669"/>
    <property type="project" value="TreeGrafter"/>
</dbReference>
<dbReference type="GO" id="GO:0004471">
    <property type="term" value="F:malate dehydrogenase (decarboxylating) (NAD+) activity"/>
    <property type="evidence" value="ECO:0007669"/>
    <property type="project" value="UniProtKB-UniRule"/>
</dbReference>
<dbReference type="GO" id="GO:0046872">
    <property type="term" value="F:metal ion binding"/>
    <property type="evidence" value="ECO:0007669"/>
    <property type="project" value="UniProtKB-KW"/>
</dbReference>
<dbReference type="GO" id="GO:0051287">
    <property type="term" value="F:NAD binding"/>
    <property type="evidence" value="ECO:0007669"/>
    <property type="project" value="InterPro"/>
</dbReference>
<dbReference type="GO" id="GO:0008948">
    <property type="term" value="F:oxaloacetate decarboxylase activity"/>
    <property type="evidence" value="ECO:0007669"/>
    <property type="project" value="UniProtKB-UniRule"/>
</dbReference>
<dbReference type="GO" id="GO:0006108">
    <property type="term" value="P:malate metabolic process"/>
    <property type="evidence" value="ECO:0007669"/>
    <property type="project" value="TreeGrafter"/>
</dbReference>
<dbReference type="CDD" id="cd05312">
    <property type="entry name" value="NAD_bind_1_malic_enz"/>
    <property type="match status" value="1"/>
</dbReference>
<dbReference type="FunFam" id="3.40.50.10380:FF:000001">
    <property type="entry name" value="NAD-dependent malic enzyme"/>
    <property type="match status" value="1"/>
</dbReference>
<dbReference type="FunFam" id="3.40.50.720:FF:000055">
    <property type="entry name" value="NAD-dependent malic enzyme"/>
    <property type="match status" value="1"/>
</dbReference>
<dbReference type="Gene3D" id="3.40.50.10380">
    <property type="entry name" value="Malic enzyme, N-terminal domain"/>
    <property type="match status" value="1"/>
</dbReference>
<dbReference type="Gene3D" id="3.40.50.720">
    <property type="entry name" value="NAD(P)-binding Rossmann-like Domain"/>
    <property type="match status" value="1"/>
</dbReference>
<dbReference type="HAMAP" id="MF_01619">
    <property type="entry name" value="NAD_malic_enz"/>
    <property type="match status" value="1"/>
</dbReference>
<dbReference type="InterPro" id="IPR046346">
    <property type="entry name" value="Aminoacid_DH-like_N_sf"/>
</dbReference>
<dbReference type="InterPro" id="IPR015884">
    <property type="entry name" value="Malic_enzyme_CS"/>
</dbReference>
<dbReference type="InterPro" id="IPR012301">
    <property type="entry name" value="Malic_N_dom"/>
</dbReference>
<dbReference type="InterPro" id="IPR037062">
    <property type="entry name" value="Malic_N_dom_sf"/>
</dbReference>
<dbReference type="InterPro" id="IPR012302">
    <property type="entry name" value="Malic_NAD-bd"/>
</dbReference>
<dbReference type="InterPro" id="IPR001891">
    <property type="entry name" value="Malic_OxRdtase"/>
</dbReference>
<dbReference type="InterPro" id="IPR036291">
    <property type="entry name" value="NAD(P)-bd_dom_sf"/>
</dbReference>
<dbReference type="InterPro" id="IPR023667">
    <property type="entry name" value="NAD_malic_enz_proteobac"/>
</dbReference>
<dbReference type="NCBIfam" id="NF010052">
    <property type="entry name" value="PRK13529.1"/>
    <property type="match status" value="1"/>
</dbReference>
<dbReference type="PANTHER" id="PTHR23406">
    <property type="entry name" value="MALIC ENZYME-RELATED"/>
    <property type="match status" value="1"/>
</dbReference>
<dbReference type="PANTHER" id="PTHR23406:SF34">
    <property type="entry name" value="NAD-DEPENDENT MALIC ENZYME, MITOCHONDRIAL"/>
    <property type="match status" value="1"/>
</dbReference>
<dbReference type="Pfam" id="PF00390">
    <property type="entry name" value="malic"/>
    <property type="match status" value="1"/>
</dbReference>
<dbReference type="Pfam" id="PF03949">
    <property type="entry name" value="Malic_M"/>
    <property type="match status" value="1"/>
</dbReference>
<dbReference type="PIRSF" id="PIRSF000106">
    <property type="entry name" value="ME"/>
    <property type="match status" value="1"/>
</dbReference>
<dbReference type="PRINTS" id="PR00072">
    <property type="entry name" value="MALOXRDTASE"/>
</dbReference>
<dbReference type="SMART" id="SM01274">
    <property type="entry name" value="malic"/>
    <property type="match status" value="1"/>
</dbReference>
<dbReference type="SMART" id="SM00919">
    <property type="entry name" value="Malic_M"/>
    <property type="match status" value="1"/>
</dbReference>
<dbReference type="SUPFAM" id="SSF53223">
    <property type="entry name" value="Aminoacid dehydrogenase-like, N-terminal domain"/>
    <property type="match status" value="1"/>
</dbReference>
<dbReference type="SUPFAM" id="SSF51735">
    <property type="entry name" value="NAD(P)-binding Rossmann-fold domains"/>
    <property type="match status" value="1"/>
</dbReference>
<dbReference type="PROSITE" id="PS00331">
    <property type="entry name" value="MALIC_ENZYMES"/>
    <property type="match status" value="1"/>
</dbReference>
<gene>
    <name evidence="1" type="primary">maeA</name>
    <name type="ordered locus">SeD_A1777</name>
</gene>
<sequence length="565" mass="62922">METITKKARSLYIPYAGPVLLEFPLLNKGSAFSVEERRNFNLSGLLPEVVESIEEQAERAWLQYQGFKTEIDKHIYLRNIQDTNETLFYRLVQNHLEEMMPVIYTPTVGAACERFSEIYRRARGVFISYPNRHNMDDILQNVPNHNIKVIVVTDGERILGLGDQGIGGMGIPIGKLSLYTACGGISPAYTLPVVLDVGTNNQQLLNDPLYMGWRHPRITDDEYYAFVDEFIQAVKQRWPDILLQFEDFAQKNAMPLLTRYRDEICSFNDDIQGTAAVTVGTLIAASRAAGSQLSEQKIVFLGAGSAGCGIAEQIIAQTQREGLSEDAARQNVFMVDRFGLLTDRMPNLLPFQAKLVQKCDNLQHWDTENDVLSLLDVVRNVKPDILIGVSGQTGLFTEEIIREMHKHCPRPIVMPLSNPTSRVEATPQDIIAWTEGNALVATGSPFSPVIWKDKIYPIAQCNNAYIFPGIGLGVIASGASRITDEMLMSASETLAKHSPLVNNGEGLVLPALKDIQVVSRAIAFAVGKMAQQQGVAVKTSAEALQQAIDDNFWKPEYRDYRRTSI</sequence>
<evidence type="ECO:0000255" key="1">
    <source>
        <dbReference type="HAMAP-Rule" id="MF_01619"/>
    </source>
</evidence>
<reference key="1">
    <citation type="journal article" date="2011" name="J. Bacteriol.">
        <title>Comparative genomics of 28 Salmonella enterica isolates: evidence for CRISPR-mediated adaptive sublineage evolution.</title>
        <authorList>
            <person name="Fricke W.F."/>
            <person name="Mammel M.K."/>
            <person name="McDermott P.F."/>
            <person name="Tartera C."/>
            <person name="White D.G."/>
            <person name="Leclerc J.E."/>
            <person name="Ravel J."/>
            <person name="Cebula T.A."/>
        </authorList>
    </citation>
    <scope>NUCLEOTIDE SEQUENCE [LARGE SCALE GENOMIC DNA]</scope>
    <source>
        <strain>CT_02021853</strain>
    </source>
</reference>
<protein>
    <recommendedName>
        <fullName evidence="1">NAD-dependent malic enzyme</fullName>
        <shortName evidence="1">NAD-ME</shortName>
        <ecNumber evidence="1">1.1.1.38</ecNumber>
    </recommendedName>
</protein>
<organism>
    <name type="scientific">Salmonella dublin (strain CT_02021853)</name>
    <dbReference type="NCBI Taxonomy" id="439851"/>
    <lineage>
        <taxon>Bacteria</taxon>
        <taxon>Pseudomonadati</taxon>
        <taxon>Pseudomonadota</taxon>
        <taxon>Gammaproteobacteria</taxon>
        <taxon>Enterobacterales</taxon>
        <taxon>Enterobacteriaceae</taxon>
        <taxon>Salmonella</taxon>
    </lineage>
</organism>
<proteinExistence type="inferred from homology"/>
<accession>B5FHJ6</accession>
<keyword id="KW-0479">Metal-binding</keyword>
<keyword id="KW-0520">NAD</keyword>
<keyword id="KW-0560">Oxidoreductase</keyword>
<feature type="chain" id="PRO_1000186004" description="NAD-dependent malic enzyme">
    <location>
        <begin position="1"/>
        <end position="565"/>
    </location>
</feature>
<feature type="active site" description="Proton donor" evidence="1">
    <location>
        <position position="104"/>
    </location>
</feature>
<feature type="active site" description="Proton acceptor" evidence="1">
    <location>
        <position position="175"/>
    </location>
</feature>
<feature type="binding site" evidence="1">
    <location>
        <position position="157"/>
    </location>
    <ligand>
        <name>NAD(+)</name>
        <dbReference type="ChEBI" id="CHEBI:57540"/>
    </ligand>
</feature>
<feature type="binding site" evidence="1">
    <location>
        <position position="246"/>
    </location>
    <ligand>
        <name>a divalent metal cation</name>
        <dbReference type="ChEBI" id="CHEBI:60240"/>
    </ligand>
</feature>
<feature type="binding site" evidence="1">
    <location>
        <position position="247"/>
    </location>
    <ligand>
        <name>a divalent metal cation</name>
        <dbReference type="ChEBI" id="CHEBI:60240"/>
    </ligand>
</feature>
<feature type="binding site" evidence="1">
    <location>
        <position position="270"/>
    </location>
    <ligand>
        <name>a divalent metal cation</name>
        <dbReference type="ChEBI" id="CHEBI:60240"/>
    </ligand>
</feature>
<feature type="binding site" evidence="1">
    <location>
        <position position="270"/>
    </location>
    <ligand>
        <name>NAD(+)</name>
        <dbReference type="ChEBI" id="CHEBI:57540"/>
    </ligand>
</feature>
<feature type="binding site" evidence="1">
    <location>
        <position position="418"/>
    </location>
    <ligand>
        <name>NAD(+)</name>
        <dbReference type="ChEBI" id="CHEBI:57540"/>
    </ligand>
</feature>
<feature type="site" description="Important for activity" evidence="1">
    <location>
        <position position="270"/>
    </location>
</feature>
<comment type="catalytic activity">
    <reaction evidence="1">
        <text>(S)-malate + NAD(+) = pyruvate + CO2 + NADH</text>
        <dbReference type="Rhea" id="RHEA:12653"/>
        <dbReference type="ChEBI" id="CHEBI:15361"/>
        <dbReference type="ChEBI" id="CHEBI:15589"/>
        <dbReference type="ChEBI" id="CHEBI:16526"/>
        <dbReference type="ChEBI" id="CHEBI:57540"/>
        <dbReference type="ChEBI" id="CHEBI:57945"/>
        <dbReference type="EC" id="1.1.1.38"/>
    </reaction>
</comment>
<comment type="catalytic activity">
    <reaction evidence="1">
        <text>oxaloacetate + H(+) = pyruvate + CO2</text>
        <dbReference type="Rhea" id="RHEA:15641"/>
        <dbReference type="ChEBI" id="CHEBI:15361"/>
        <dbReference type="ChEBI" id="CHEBI:15378"/>
        <dbReference type="ChEBI" id="CHEBI:16452"/>
        <dbReference type="ChEBI" id="CHEBI:16526"/>
        <dbReference type="EC" id="1.1.1.38"/>
    </reaction>
</comment>
<comment type="cofactor">
    <cofactor evidence="1">
        <name>Mg(2+)</name>
        <dbReference type="ChEBI" id="CHEBI:18420"/>
    </cofactor>
    <cofactor evidence="1">
        <name>Mn(2+)</name>
        <dbReference type="ChEBI" id="CHEBI:29035"/>
    </cofactor>
    <text evidence="1">Divalent metal cations. Prefers magnesium or manganese.</text>
</comment>
<comment type="subunit">
    <text evidence="1">Homotetramer.</text>
</comment>
<comment type="similarity">
    <text evidence="1">Belongs to the malic enzymes family.</text>
</comment>